<gene>
    <name evidence="1" type="primary">dxr</name>
    <name type="ordered locus">PSPPH_3834</name>
</gene>
<feature type="chain" id="PRO_0000163699" description="1-deoxy-D-xylulose 5-phosphate reductoisomerase">
    <location>
        <begin position="1"/>
        <end position="396"/>
    </location>
</feature>
<feature type="binding site" evidence="1">
    <location>
        <position position="13"/>
    </location>
    <ligand>
        <name>NADPH</name>
        <dbReference type="ChEBI" id="CHEBI:57783"/>
    </ligand>
</feature>
<feature type="binding site" evidence="1">
    <location>
        <position position="14"/>
    </location>
    <ligand>
        <name>NADPH</name>
        <dbReference type="ChEBI" id="CHEBI:57783"/>
    </ligand>
</feature>
<feature type="binding site" evidence="1">
    <location>
        <position position="15"/>
    </location>
    <ligand>
        <name>NADPH</name>
        <dbReference type="ChEBI" id="CHEBI:57783"/>
    </ligand>
</feature>
<feature type="binding site" evidence="1">
    <location>
        <position position="16"/>
    </location>
    <ligand>
        <name>NADPH</name>
        <dbReference type="ChEBI" id="CHEBI:57783"/>
    </ligand>
</feature>
<feature type="binding site" evidence="1">
    <location>
        <position position="127"/>
    </location>
    <ligand>
        <name>NADPH</name>
        <dbReference type="ChEBI" id="CHEBI:57783"/>
    </ligand>
</feature>
<feature type="binding site" evidence="1">
    <location>
        <position position="128"/>
    </location>
    <ligand>
        <name>1-deoxy-D-xylulose 5-phosphate</name>
        <dbReference type="ChEBI" id="CHEBI:57792"/>
    </ligand>
</feature>
<feature type="binding site" evidence="1">
    <location>
        <position position="129"/>
    </location>
    <ligand>
        <name>NADPH</name>
        <dbReference type="ChEBI" id="CHEBI:57783"/>
    </ligand>
</feature>
<feature type="binding site" evidence="1">
    <location>
        <position position="153"/>
    </location>
    <ligand>
        <name>Mn(2+)</name>
        <dbReference type="ChEBI" id="CHEBI:29035"/>
    </ligand>
</feature>
<feature type="binding site" evidence="1">
    <location>
        <position position="154"/>
    </location>
    <ligand>
        <name>1-deoxy-D-xylulose 5-phosphate</name>
        <dbReference type="ChEBI" id="CHEBI:57792"/>
    </ligand>
</feature>
<feature type="binding site" evidence="1">
    <location>
        <position position="155"/>
    </location>
    <ligand>
        <name>1-deoxy-D-xylulose 5-phosphate</name>
        <dbReference type="ChEBI" id="CHEBI:57792"/>
    </ligand>
</feature>
<feature type="binding site" evidence="1">
    <location>
        <position position="155"/>
    </location>
    <ligand>
        <name>Mn(2+)</name>
        <dbReference type="ChEBI" id="CHEBI:29035"/>
    </ligand>
</feature>
<feature type="binding site" evidence="1">
    <location>
        <position position="184"/>
    </location>
    <ligand>
        <name>1-deoxy-D-xylulose 5-phosphate</name>
        <dbReference type="ChEBI" id="CHEBI:57792"/>
    </ligand>
</feature>
<feature type="binding site" evidence="1">
    <location>
        <position position="207"/>
    </location>
    <ligand>
        <name>1-deoxy-D-xylulose 5-phosphate</name>
        <dbReference type="ChEBI" id="CHEBI:57792"/>
    </ligand>
</feature>
<feature type="binding site" evidence="1">
    <location>
        <position position="213"/>
    </location>
    <ligand>
        <name>NADPH</name>
        <dbReference type="ChEBI" id="CHEBI:57783"/>
    </ligand>
</feature>
<feature type="binding site" evidence="1">
    <location>
        <position position="220"/>
    </location>
    <ligand>
        <name>1-deoxy-D-xylulose 5-phosphate</name>
        <dbReference type="ChEBI" id="CHEBI:57792"/>
    </ligand>
</feature>
<feature type="binding site" evidence="1">
    <location>
        <position position="225"/>
    </location>
    <ligand>
        <name>1-deoxy-D-xylulose 5-phosphate</name>
        <dbReference type="ChEBI" id="CHEBI:57792"/>
    </ligand>
</feature>
<feature type="binding site" evidence="1">
    <location>
        <position position="226"/>
    </location>
    <ligand>
        <name>1-deoxy-D-xylulose 5-phosphate</name>
        <dbReference type="ChEBI" id="CHEBI:57792"/>
    </ligand>
</feature>
<feature type="binding site" evidence="1">
    <location>
        <position position="229"/>
    </location>
    <ligand>
        <name>1-deoxy-D-xylulose 5-phosphate</name>
        <dbReference type="ChEBI" id="CHEBI:57792"/>
    </ligand>
</feature>
<feature type="binding site" evidence="1">
    <location>
        <position position="229"/>
    </location>
    <ligand>
        <name>Mn(2+)</name>
        <dbReference type="ChEBI" id="CHEBI:29035"/>
    </ligand>
</feature>
<organism>
    <name type="scientific">Pseudomonas savastanoi pv. phaseolicola (strain 1448A / Race 6)</name>
    <name type="common">Pseudomonas syringae pv. phaseolicola (strain 1448A / Race 6)</name>
    <dbReference type="NCBI Taxonomy" id="264730"/>
    <lineage>
        <taxon>Bacteria</taxon>
        <taxon>Pseudomonadati</taxon>
        <taxon>Pseudomonadota</taxon>
        <taxon>Gammaproteobacteria</taxon>
        <taxon>Pseudomonadales</taxon>
        <taxon>Pseudomonadaceae</taxon>
        <taxon>Pseudomonas</taxon>
    </lineage>
</organism>
<name>DXR_PSE14</name>
<reference key="1">
    <citation type="journal article" date="2005" name="J. Bacteriol.">
        <title>Whole-genome sequence analysis of Pseudomonas syringae pv. phaseolicola 1448A reveals divergence among pathovars in genes involved in virulence and transposition.</title>
        <authorList>
            <person name="Joardar V."/>
            <person name="Lindeberg M."/>
            <person name="Jackson R.W."/>
            <person name="Selengut J."/>
            <person name="Dodson R."/>
            <person name="Brinkac L.M."/>
            <person name="Daugherty S.C."/>
            <person name="DeBoy R.T."/>
            <person name="Durkin A.S."/>
            <person name="Gwinn Giglio M."/>
            <person name="Madupu R."/>
            <person name="Nelson W.C."/>
            <person name="Rosovitz M.J."/>
            <person name="Sullivan S.A."/>
            <person name="Crabtree J."/>
            <person name="Creasy T."/>
            <person name="Davidsen T.M."/>
            <person name="Haft D.H."/>
            <person name="Zafar N."/>
            <person name="Zhou L."/>
            <person name="Halpin R."/>
            <person name="Holley T."/>
            <person name="Khouri H.M."/>
            <person name="Feldblyum T.V."/>
            <person name="White O."/>
            <person name="Fraser C.M."/>
            <person name="Chatterjee A.K."/>
            <person name="Cartinhour S."/>
            <person name="Schneider D."/>
            <person name="Mansfield J.W."/>
            <person name="Collmer A."/>
            <person name="Buell R."/>
        </authorList>
    </citation>
    <scope>NUCLEOTIDE SEQUENCE [LARGE SCALE GENOMIC DNA]</scope>
    <source>
        <strain>1448A / Race 6</strain>
    </source>
</reference>
<accession>Q48F65</accession>
<keyword id="KW-0414">Isoprene biosynthesis</keyword>
<keyword id="KW-0464">Manganese</keyword>
<keyword id="KW-0479">Metal-binding</keyword>
<keyword id="KW-0521">NADP</keyword>
<keyword id="KW-0560">Oxidoreductase</keyword>
<evidence type="ECO:0000255" key="1">
    <source>
        <dbReference type="HAMAP-Rule" id="MF_00183"/>
    </source>
</evidence>
<protein>
    <recommendedName>
        <fullName evidence="1">1-deoxy-D-xylulose 5-phosphate reductoisomerase</fullName>
        <shortName evidence="1">DXP reductoisomerase</shortName>
        <ecNumber evidence="1">1.1.1.267</ecNumber>
    </recommendedName>
    <alternativeName>
        <fullName evidence="1">1-deoxyxylulose-5-phosphate reductoisomerase</fullName>
    </alternativeName>
    <alternativeName>
        <fullName evidence="1">2-C-methyl-D-erythritol 4-phosphate synthase</fullName>
    </alternativeName>
</protein>
<comment type="function">
    <text evidence="1">Catalyzes the NADPH-dependent rearrangement and reduction of 1-deoxy-D-xylulose-5-phosphate (DXP) to 2-C-methyl-D-erythritol 4-phosphate (MEP).</text>
</comment>
<comment type="catalytic activity">
    <reaction evidence="1">
        <text>2-C-methyl-D-erythritol 4-phosphate + NADP(+) = 1-deoxy-D-xylulose 5-phosphate + NADPH + H(+)</text>
        <dbReference type="Rhea" id="RHEA:13717"/>
        <dbReference type="ChEBI" id="CHEBI:15378"/>
        <dbReference type="ChEBI" id="CHEBI:57783"/>
        <dbReference type="ChEBI" id="CHEBI:57792"/>
        <dbReference type="ChEBI" id="CHEBI:58262"/>
        <dbReference type="ChEBI" id="CHEBI:58349"/>
        <dbReference type="EC" id="1.1.1.267"/>
    </reaction>
    <physiologicalReaction direction="right-to-left" evidence="1">
        <dbReference type="Rhea" id="RHEA:13719"/>
    </physiologicalReaction>
</comment>
<comment type="cofactor">
    <cofactor evidence="1">
        <name>Mg(2+)</name>
        <dbReference type="ChEBI" id="CHEBI:18420"/>
    </cofactor>
    <cofactor evidence="1">
        <name>Mn(2+)</name>
        <dbReference type="ChEBI" id="CHEBI:29035"/>
    </cofactor>
</comment>
<comment type="pathway">
    <text evidence="1">Isoprenoid biosynthesis; isopentenyl diphosphate biosynthesis via DXP pathway; isopentenyl diphosphate from 1-deoxy-D-xylulose 5-phosphate: step 1/6.</text>
</comment>
<comment type="similarity">
    <text evidence="1">Belongs to the DXR family.</text>
</comment>
<proteinExistence type="inferred from homology"/>
<sequence length="396" mass="42342">MSGPQHITILGATGSIGLSTLDVVARHPSRYQVFALTGFSRLDELLALCVRHTPQYAVVPDQFVARKLQDDLAAAVLDTRVLVGEGGLCEVAAHPRVDAVMAAIVGAAGLRPTLAAVEAGKKVLLANKEALVMSGDLFMQAVRQSGAVLLPIDSEHNAIFQCLPGDFARGLGAVGVRRIMLTASGGPFRETPLEQLQNVTPEQACAHPVWSMGRKISVDSATMMNKGLELIEACWLFDARPDQVEVVIHPQSVIHSLVDYVDGSVLAQLGNPDMRTPIANALAWPARVDSGVAPLDLFRIGQLDFQKPDEERFPCLRLARHAAEAGGSAPAMLNAANEVAVAAFLDGRIRYLEIAGIIEEVLNHEPVTAVEGLDAVFAADAKARLLAGQWLERNAR</sequence>
<dbReference type="EC" id="1.1.1.267" evidence="1"/>
<dbReference type="EMBL" id="CP000058">
    <property type="protein sequence ID" value="AAZ37105.1"/>
    <property type="molecule type" value="Genomic_DNA"/>
</dbReference>
<dbReference type="SMR" id="Q48F65"/>
<dbReference type="KEGG" id="psp:PSPPH_3834"/>
<dbReference type="eggNOG" id="COG0743">
    <property type="taxonomic scope" value="Bacteria"/>
</dbReference>
<dbReference type="HOGENOM" id="CLU_035714_4_0_6"/>
<dbReference type="UniPathway" id="UPA00056">
    <property type="reaction ID" value="UER00092"/>
</dbReference>
<dbReference type="Proteomes" id="UP000000551">
    <property type="component" value="Chromosome"/>
</dbReference>
<dbReference type="GO" id="GO:0030604">
    <property type="term" value="F:1-deoxy-D-xylulose-5-phosphate reductoisomerase activity"/>
    <property type="evidence" value="ECO:0007669"/>
    <property type="project" value="UniProtKB-UniRule"/>
</dbReference>
<dbReference type="GO" id="GO:0030145">
    <property type="term" value="F:manganese ion binding"/>
    <property type="evidence" value="ECO:0007669"/>
    <property type="project" value="TreeGrafter"/>
</dbReference>
<dbReference type="GO" id="GO:0070402">
    <property type="term" value="F:NADPH binding"/>
    <property type="evidence" value="ECO:0007669"/>
    <property type="project" value="InterPro"/>
</dbReference>
<dbReference type="GO" id="GO:0051484">
    <property type="term" value="P:isopentenyl diphosphate biosynthetic process, methylerythritol 4-phosphate pathway involved in terpenoid biosynthetic process"/>
    <property type="evidence" value="ECO:0007669"/>
    <property type="project" value="TreeGrafter"/>
</dbReference>
<dbReference type="FunFam" id="1.10.1740.10:FF:000004">
    <property type="entry name" value="1-deoxy-D-xylulose 5-phosphate reductoisomerase"/>
    <property type="match status" value="1"/>
</dbReference>
<dbReference type="FunFam" id="3.40.50.720:FF:000045">
    <property type="entry name" value="1-deoxy-D-xylulose 5-phosphate reductoisomerase"/>
    <property type="match status" value="1"/>
</dbReference>
<dbReference type="Gene3D" id="1.10.1740.10">
    <property type="match status" value="1"/>
</dbReference>
<dbReference type="Gene3D" id="3.40.50.720">
    <property type="entry name" value="NAD(P)-binding Rossmann-like Domain"/>
    <property type="match status" value="1"/>
</dbReference>
<dbReference type="HAMAP" id="MF_00183">
    <property type="entry name" value="DXP_reductoisom"/>
    <property type="match status" value="1"/>
</dbReference>
<dbReference type="InterPro" id="IPR003821">
    <property type="entry name" value="DXP_reductoisomerase"/>
</dbReference>
<dbReference type="InterPro" id="IPR013644">
    <property type="entry name" value="DXP_reductoisomerase_C"/>
</dbReference>
<dbReference type="InterPro" id="IPR013512">
    <property type="entry name" value="DXP_reductoisomerase_N"/>
</dbReference>
<dbReference type="InterPro" id="IPR026877">
    <property type="entry name" value="DXPR_C"/>
</dbReference>
<dbReference type="InterPro" id="IPR036169">
    <property type="entry name" value="DXPR_C_sf"/>
</dbReference>
<dbReference type="InterPro" id="IPR036291">
    <property type="entry name" value="NAD(P)-bd_dom_sf"/>
</dbReference>
<dbReference type="NCBIfam" id="TIGR00243">
    <property type="entry name" value="Dxr"/>
    <property type="match status" value="1"/>
</dbReference>
<dbReference type="NCBIfam" id="NF003938">
    <property type="entry name" value="PRK05447.1-1"/>
    <property type="match status" value="1"/>
</dbReference>
<dbReference type="NCBIfam" id="NF009114">
    <property type="entry name" value="PRK12464.1"/>
    <property type="match status" value="1"/>
</dbReference>
<dbReference type="PANTHER" id="PTHR30525">
    <property type="entry name" value="1-DEOXY-D-XYLULOSE 5-PHOSPHATE REDUCTOISOMERASE"/>
    <property type="match status" value="1"/>
</dbReference>
<dbReference type="PANTHER" id="PTHR30525:SF0">
    <property type="entry name" value="1-DEOXY-D-XYLULOSE 5-PHOSPHATE REDUCTOISOMERASE, CHLOROPLASTIC"/>
    <property type="match status" value="1"/>
</dbReference>
<dbReference type="Pfam" id="PF08436">
    <property type="entry name" value="DXP_redisom_C"/>
    <property type="match status" value="1"/>
</dbReference>
<dbReference type="Pfam" id="PF02670">
    <property type="entry name" value="DXP_reductoisom"/>
    <property type="match status" value="1"/>
</dbReference>
<dbReference type="Pfam" id="PF13288">
    <property type="entry name" value="DXPR_C"/>
    <property type="match status" value="1"/>
</dbReference>
<dbReference type="PIRSF" id="PIRSF006205">
    <property type="entry name" value="Dxp_reductismrs"/>
    <property type="match status" value="1"/>
</dbReference>
<dbReference type="SUPFAM" id="SSF69055">
    <property type="entry name" value="1-deoxy-D-xylulose-5-phosphate reductoisomerase, C-terminal domain"/>
    <property type="match status" value="1"/>
</dbReference>
<dbReference type="SUPFAM" id="SSF55347">
    <property type="entry name" value="Glyceraldehyde-3-phosphate dehydrogenase-like, C-terminal domain"/>
    <property type="match status" value="1"/>
</dbReference>
<dbReference type="SUPFAM" id="SSF51735">
    <property type="entry name" value="NAD(P)-binding Rossmann-fold domains"/>
    <property type="match status" value="1"/>
</dbReference>